<protein>
    <recommendedName>
        <fullName evidence="1">ATP synthase membrane subunit K, mitochondrial</fullName>
    </recommendedName>
</protein>
<dbReference type="EMBL" id="AE014298">
    <property type="protein sequence ID" value="AAF50911.1"/>
    <property type="molecule type" value="Genomic_DNA"/>
</dbReference>
<dbReference type="EMBL" id="BT053720">
    <property type="protein sequence ID" value="ACK77638.1"/>
    <property type="molecule type" value="mRNA"/>
</dbReference>
<dbReference type="RefSeq" id="NP_652293.1">
    <property type="nucleotide sequence ID" value="NM_144036.3"/>
</dbReference>
<dbReference type="SMR" id="Q9VR93"/>
<dbReference type="BioGRID" id="72554">
    <property type="interactions" value="3"/>
</dbReference>
<dbReference type="ComplexPortal" id="CPX-8619">
    <property type="entry name" value="Mitochondrial proton-transporting ATP synthase complex, testis-specific variant"/>
</dbReference>
<dbReference type="DIP" id="DIP-17662N"/>
<dbReference type="FunCoup" id="Q9VR93">
    <property type="interactions" value="7"/>
</dbReference>
<dbReference type="IntAct" id="Q9VR93">
    <property type="interactions" value="2"/>
</dbReference>
<dbReference type="STRING" id="7227.FBpp0077020"/>
<dbReference type="PaxDb" id="7227-FBpp0077020"/>
<dbReference type="DNASU" id="50124"/>
<dbReference type="EnsemblMetazoa" id="FBtr0077328">
    <property type="protein sequence ID" value="FBpp0077020"/>
    <property type="gene ID" value="FBgn0040651"/>
</dbReference>
<dbReference type="GeneID" id="50124"/>
<dbReference type="KEGG" id="dme:Dmel_CG15458"/>
<dbReference type="UCSC" id="CG15458-RA">
    <property type="organism name" value="d. melanogaster"/>
</dbReference>
<dbReference type="AGR" id="FB:FBgn0040651"/>
<dbReference type="FlyBase" id="FBgn0040651">
    <property type="gene designation" value="CG15458"/>
</dbReference>
<dbReference type="VEuPathDB" id="VectorBase:FBgn0040651"/>
<dbReference type="eggNOG" id="ENOG502T99V">
    <property type="taxonomic scope" value="Eukaryota"/>
</dbReference>
<dbReference type="HOGENOM" id="CLU_2888138_0_0_1"/>
<dbReference type="InParanoid" id="Q9VR93"/>
<dbReference type="OMA" id="CKGCQQA"/>
<dbReference type="OrthoDB" id="9435504at2759"/>
<dbReference type="PhylomeDB" id="Q9VR93"/>
<dbReference type="BioGRID-ORCS" id="50124">
    <property type="hits" value="0 hits in 1 CRISPR screen"/>
</dbReference>
<dbReference type="GenomeRNAi" id="50124"/>
<dbReference type="PRO" id="PR:Q9VR93"/>
<dbReference type="Proteomes" id="UP000000803">
    <property type="component" value="Chromosome X"/>
</dbReference>
<dbReference type="Bgee" id="FBgn0040651">
    <property type="expression patterns" value="Expressed in mid-late elongation-stage spermatid (Drosophila) in testis and 17 other cell types or tissues"/>
</dbReference>
<dbReference type="GO" id="GO:0005743">
    <property type="term" value="C:mitochondrial inner membrane"/>
    <property type="evidence" value="ECO:0000305"/>
    <property type="project" value="FlyBase"/>
</dbReference>
<dbReference type="GO" id="GO:0045259">
    <property type="term" value="C:proton-transporting ATP synthase complex"/>
    <property type="evidence" value="ECO:0000250"/>
    <property type="project" value="FlyBase"/>
</dbReference>
<dbReference type="GO" id="GO:0015986">
    <property type="term" value="P:proton motive force-driven ATP synthesis"/>
    <property type="evidence" value="ECO:0000305"/>
    <property type="project" value="FlyBase"/>
</dbReference>
<dbReference type="InterPro" id="IPR009125">
    <property type="entry name" value="ATPMK"/>
</dbReference>
<dbReference type="PANTHER" id="PTHR34038">
    <property type="entry name" value="ATP SYNTHASE MEMBRANE SUBUNIT DAPIT, MITOCHONDRIAL"/>
    <property type="match status" value="1"/>
</dbReference>
<dbReference type="PANTHER" id="PTHR34038:SF1">
    <property type="entry name" value="ATP SYNTHASE MEMBRANE SUBUNIT K, MITOCHONDRIAL"/>
    <property type="match status" value="1"/>
</dbReference>
<dbReference type="Pfam" id="PF14960">
    <property type="entry name" value="ATP_synth_reg"/>
    <property type="match status" value="1"/>
</dbReference>
<sequence length="63" mass="7303">MSDHFNFNEAFNSQTMRGRANVAKATWASLGLVYVLVKMHRRNTKRRETKLYCKGCQQAMLHG</sequence>
<comment type="function">
    <text evidence="1">Mitochondrial membrane ATP synthase (F(1)F(0) ATP synthase or Complex V) produces ATP from ADP in the presence of a proton gradient across the membrane which is generated by electron transport complexes of the respiratory chain. F-type ATPases consist of two structural domains, F(1) - containing the extramembraneous catalytic core and F(0) - containing the membrane proton channel, linked together by a central stalk and a peripheral stalk. During catalysis, ATP synthesis in the catalytic domain of F(1) is coupled via a rotary mechanism of the central stalk subunits to proton translocation. ATP5MK is a minor subunit of the mitochondrial membrane ATP synthase required for dimerization of the ATP synthase complex and as such regulates ATP synthesis in the mitochondria.</text>
</comment>
<comment type="subunit">
    <text evidence="1">F-type ATPases have 2 components, CF(1) - the catalytic core - and CF(0) - the membrane proton channel. CF(1) has five subunits: alpha(3), beta(3), gamma(1), delta(1), epsilon(1). CF(0) has three main subunits: a, b and c. The ATP synthase complex/complex V exists as a monomeric and a dimeric supercomplex that helps shape mitochondrial cristae to optimize proton flow.</text>
</comment>
<comment type="interaction">
    <interactant intactId="EBI-113067">
        <id>Q9VR93</id>
    </interactant>
    <interactant intactId="EBI-15107367">
        <id>A0A0B4KEQ7</id>
        <label>Dmel\CG10209</label>
    </interactant>
    <organismsDiffer>false</organismsDiffer>
    <experiments>3</experiments>
</comment>
<comment type="subcellular location">
    <subcellularLocation>
        <location evidence="1">Mitochondrion membrane</location>
        <topology evidence="2">Single-pass membrane protein</topology>
    </subcellularLocation>
</comment>
<name>ATPMK_DROME</name>
<gene>
    <name type="ORF">CG15458</name>
</gene>
<reference key="1">
    <citation type="journal article" date="2000" name="Science">
        <title>The genome sequence of Drosophila melanogaster.</title>
        <authorList>
            <person name="Adams M.D."/>
            <person name="Celniker S.E."/>
            <person name="Holt R.A."/>
            <person name="Evans C.A."/>
            <person name="Gocayne J.D."/>
            <person name="Amanatides P.G."/>
            <person name="Scherer S.E."/>
            <person name="Li P.W."/>
            <person name="Hoskins R.A."/>
            <person name="Galle R.F."/>
            <person name="George R.A."/>
            <person name="Lewis S.E."/>
            <person name="Richards S."/>
            <person name="Ashburner M."/>
            <person name="Henderson S.N."/>
            <person name="Sutton G.G."/>
            <person name="Wortman J.R."/>
            <person name="Yandell M.D."/>
            <person name="Zhang Q."/>
            <person name="Chen L.X."/>
            <person name="Brandon R.C."/>
            <person name="Rogers Y.-H.C."/>
            <person name="Blazej R.G."/>
            <person name="Champe M."/>
            <person name="Pfeiffer B.D."/>
            <person name="Wan K.H."/>
            <person name="Doyle C."/>
            <person name="Baxter E.G."/>
            <person name="Helt G."/>
            <person name="Nelson C.R."/>
            <person name="Miklos G.L.G."/>
            <person name="Abril J.F."/>
            <person name="Agbayani A."/>
            <person name="An H.-J."/>
            <person name="Andrews-Pfannkoch C."/>
            <person name="Baldwin D."/>
            <person name="Ballew R.M."/>
            <person name="Basu A."/>
            <person name="Baxendale J."/>
            <person name="Bayraktaroglu L."/>
            <person name="Beasley E.M."/>
            <person name="Beeson K.Y."/>
            <person name="Benos P.V."/>
            <person name="Berman B.P."/>
            <person name="Bhandari D."/>
            <person name="Bolshakov S."/>
            <person name="Borkova D."/>
            <person name="Botchan M.R."/>
            <person name="Bouck J."/>
            <person name="Brokstein P."/>
            <person name="Brottier P."/>
            <person name="Burtis K.C."/>
            <person name="Busam D.A."/>
            <person name="Butler H."/>
            <person name="Cadieu E."/>
            <person name="Center A."/>
            <person name="Chandra I."/>
            <person name="Cherry J.M."/>
            <person name="Cawley S."/>
            <person name="Dahlke C."/>
            <person name="Davenport L.B."/>
            <person name="Davies P."/>
            <person name="de Pablos B."/>
            <person name="Delcher A."/>
            <person name="Deng Z."/>
            <person name="Mays A.D."/>
            <person name="Dew I."/>
            <person name="Dietz S.M."/>
            <person name="Dodson K."/>
            <person name="Doup L.E."/>
            <person name="Downes M."/>
            <person name="Dugan-Rocha S."/>
            <person name="Dunkov B.C."/>
            <person name="Dunn P."/>
            <person name="Durbin K.J."/>
            <person name="Evangelista C.C."/>
            <person name="Ferraz C."/>
            <person name="Ferriera S."/>
            <person name="Fleischmann W."/>
            <person name="Fosler C."/>
            <person name="Gabrielian A.E."/>
            <person name="Garg N.S."/>
            <person name="Gelbart W.M."/>
            <person name="Glasser K."/>
            <person name="Glodek A."/>
            <person name="Gong F."/>
            <person name="Gorrell J.H."/>
            <person name="Gu Z."/>
            <person name="Guan P."/>
            <person name="Harris M."/>
            <person name="Harris N.L."/>
            <person name="Harvey D.A."/>
            <person name="Heiman T.J."/>
            <person name="Hernandez J.R."/>
            <person name="Houck J."/>
            <person name="Hostin D."/>
            <person name="Houston K.A."/>
            <person name="Howland T.J."/>
            <person name="Wei M.-H."/>
            <person name="Ibegwam C."/>
            <person name="Jalali M."/>
            <person name="Kalush F."/>
            <person name="Karpen G.H."/>
            <person name="Ke Z."/>
            <person name="Kennison J.A."/>
            <person name="Ketchum K.A."/>
            <person name="Kimmel B.E."/>
            <person name="Kodira C.D."/>
            <person name="Kraft C.L."/>
            <person name="Kravitz S."/>
            <person name="Kulp D."/>
            <person name="Lai Z."/>
            <person name="Lasko P."/>
            <person name="Lei Y."/>
            <person name="Levitsky A.A."/>
            <person name="Li J.H."/>
            <person name="Li Z."/>
            <person name="Liang Y."/>
            <person name="Lin X."/>
            <person name="Liu X."/>
            <person name="Mattei B."/>
            <person name="McIntosh T.C."/>
            <person name="McLeod M.P."/>
            <person name="McPherson D."/>
            <person name="Merkulov G."/>
            <person name="Milshina N.V."/>
            <person name="Mobarry C."/>
            <person name="Morris J."/>
            <person name="Moshrefi A."/>
            <person name="Mount S.M."/>
            <person name="Moy M."/>
            <person name="Murphy B."/>
            <person name="Murphy L."/>
            <person name="Muzny D.M."/>
            <person name="Nelson D.L."/>
            <person name="Nelson D.R."/>
            <person name="Nelson K.A."/>
            <person name="Nixon K."/>
            <person name="Nusskern D.R."/>
            <person name="Pacleb J.M."/>
            <person name="Palazzolo M."/>
            <person name="Pittman G.S."/>
            <person name="Pan S."/>
            <person name="Pollard J."/>
            <person name="Puri V."/>
            <person name="Reese M.G."/>
            <person name="Reinert K."/>
            <person name="Remington K."/>
            <person name="Saunders R.D.C."/>
            <person name="Scheeler F."/>
            <person name="Shen H."/>
            <person name="Shue B.C."/>
            <person name="Siden-Kiamos I."/>
            <person name="Simpson M."/>
            <person name="Skupski M.P."/>
            <person name="Smith T.J."/>
            <person name="Spier E."/>
            <person name="Spradling A.C."/>
            <person name="Stapleton M."/>
            <person name="Strong R."/>
            <person name="Sun E."/>
            <person name="Svirskas R."/>
            <person name="Tector C."/>
            <person name="Turner R."/>
            <person name="Venter E."/>
            <person name="Wang A.H."/>
            <person name="Wang X."/>
            <person name="Wang Z.-Y."/>
            <person name="Wassarman D.A."/>
            <person name="Weinstock G.M."/>
            <person name="Weissenbach J."/>
            <person name="Williams S.M."/>
            <person name="Woodage T."/>
            <person name="Worley K.C."/>
            <person name="Wu D."/>
            <person name="Yang S."/>
            <person name="Yao Q.A."/>
            <person name="Ye J."/>
            <person name="Yeh R.-F."/>
            <person name="Zaveri J.S."/>
            <person name="Zhan M."/>
            <person name="Zhang G."/>
            <person name="Zhao Q."/>
            <person name="Zheng L."/>
            <person name="Zheng X.H."/>
            <person name="Zhong F.N."/>
            <person name="Zhong W."/>
            <person name="Zhou X."/>
            <person name="Zhu S.C."/>
            <person name="Zhu X."/>
            <person name="Smith H.O."/>
            <person name="Gibbs R.A."/>
            <person name="Myers E.W."/>
            <person name="Rubin G.M."/>
            <person name="Venter J.C."/>
        </authorList>
    </citation>
    <scope>NUCLEOTIDE SEQUENCE [LARGE SCALE GENOMIC DNA]</scope>
    <source>
        <strain>Berkeley</strain>
    </source>
</reference>
<reference key="2">
    <citation type="journal article" date="2002" name="Genome Biol.">
        <title>Annotation of the Drosophila melanogaster euchromatic genome: a systematic review.</title>
        <authorList>
            <person name="Misra S."/>
            <person name="Crosby M.A."/>
            <person name="Mungall C.J."/>
            <person name="Matthews B.B."/>
            <person name="Campbell K.S."/>
            <person name="Hradecky P."/>
            <person name="Huang Y."/>
            <person name="Kaminker J.S."/>
            <person name="Millburn G.H."/>
            <person name="Prochnik S.E."/>
            <person name="Smith C.D."/>
            <person name="Tupy J.L."/>
            <person name="Whitfield E.J."/>
            <person name="Bayraktaroglu L."/>
            <person name="Berman B.P."/>
            <person name="Bettencourt B.R."/>
            <person name="Celniker S.E."/>
            <person name="de Grey A.D.N.J."/>
            <person name="Drysdale R.A."/>
            <person name="Harris N.L."/>
            <person name="Richter J."/>
            <person name="Russo S."/>
            <person name="Schroeder A.J."/>
            <person name="Shu S.Q."/>
            <person name="Stapleton M."/>
            <person name="Yamada C."/>
            <person name="Ashburner M."/>
            <person name="Gelbart W.M."/>
            <person name="Rubin G.M."/>
            <person name="Lewis S.E."/>
        </authorList>
    </citation>
    <scope>GENOME REANNOTATION</scope>
    <source>
        <strain>Berkeley</strain>
    </source>
</reference>
<reference key="3">
    <citation type="submission" date="2008-12" db="EMBL/GenBank/DDBJ databases">
        <authorList>
            <person name="Carlson J.W."/>
            <person name="Booth B."/>
            <person name="Frise E."/>
            <person name="Park S."/>
            <person name="Wan K.H."/>
            <person name="Yu C."/>
            <person name="Celniker S.E."/>
        </authorList>
    </citation>
    <scope>NUCLEOTIDE SEQUENCE [LARGE SCALE MRNA]</scope>
    <source>
        <strain>Berkeley</strain>
    </source>
</reference>
<evidence type="ECO:0000250" key="1">
    <source>
        <dbReference type="UniProtKB" id="Q96IX5"/>
    </source>
</evidence>
<evidence type="ECO:0000255" key="2"/>
<keyword id="KW-0472">Membrane</keyword>
<keyword id="KW-0496">Mitochondrion</keyword>
<keyword id="KW-1185">Reference proteome</keyword>
<keyword id="KW-0812">Transmembrane</keyword>
<keyword id="KW-1133">Transmembrane helix</keyword>
<feature type="chain" id="PRO_0000170306" description="ATP synthase membrane subunit K, mitochondrial">
    <location>
        <begin position="1"/>
        <end position="63"/>
    </location>
</feature>
<feature type="transmembrane region" description="Helical" evidence="2">
    <location>
        <begin position="15"/>
        <end position="37"/>
    </location>
</feature>
<organism>
    <name type="scientific">Drosophila melanogaster</name>
    <name type="common">Fruit fly</name>
    <dbReference type="NCBI Taxonomy" id="7227"/>
    <lineage>
        <taxon>Eukaryota</taxon>
        <taxon>Metazoa</taxon>
        <taxon>Ecdysozoa</taxon>
        <taxon>Arthropoda</taxon>
        <taxon>Hexapoda</taxon>
        <taxon>Insecta</taxon>
        <taxon>Pterygota</taxon>
        <taxon>Neoptera</taxon>
        <taxon>Endopterygota</taxon>
        <taxon>Diptera</taxon>
        <taxon>Brachycera</taxon>
        <taxon>Muscomorpha</taxon>
        <taxon>Ephydroidea</taxon>
        <taxon>Drosophilidae</taxon>
        <taxon>Drosophila</taxon>
        <taxon>Sophophora</taxon>
    </lineage>
</organism>
<accession>Q9VR93</accession>
<accession>B7FNN0</accession>
<proteinExistence type="evidence at protein level"/>